<proteinExistence type="evidence at transcript level"/>
<reference key="1">
    <citation type="submission" date="2008-02" db="EMBL/GenBank/DDBJ databases">
        <authorList>
            <consortium name="NIH - Xenopus Gene Collection (XGC) project"/>
        </authorList>
    </citation>
    <scope>NUCLEOTIDE SEQUENCE [LARGE SCALE MRNA]</scope>
    <source>
        <tissue>Brain</tissue>
    </source>
</reference>
<organism>
    <name type="scientific">Xenopus tropicalis</name>
    <name type="common">Western clawed frog</name>
    <name type="synonym">Silurana tropicalis</name>
    <dbReference type="NCBI Taxonomy" id="8364"/>
    <lineage>
        <taxon>Eukaryota</taxon>
        <taxon>Metazoa</taxon>
        <taxon>Chordata</taxon>
        <taxon>Craniata</taxon>
        <taxon>Vertebrata</taxon>
        <taxon>Euteleostomi</taxon>
        <taxon>Amphibia</taxon>
        <taxon>Batrachia</taxon>
        <taxon>Anura</taxon>
        <taxon>Pipoidea</taxon>
        <taxon>Pipidae</taxon>
        <taxon>Xenopodinae</taxon>
        <taxon>Xenopus</taxon>
        <taxon>Silurana</taxon>
    </lineage>
</organism>
<gene>
    <name type="primary">map6</name>
</gene>
<feature type="chain" id="PRO_0000344048" description="Microtubule-associated protein 6 homolog">
    <location>
        <begin position="1"/>
        <end position="378"/>
    </location>
</feature>
<feature type="region of interest" description="Disordered" evidence="2">
    <location>
        <begin position="36"/>
        <end position="111"/>
    </location>
</feature>
<feature type="region of interest" description="Mn 1">
    <location>
        <begin position="79"/>
        <end position="99"/>
    </location>
</feature>
<feature type="region of interest" description="Mn 2">
    <location>
        <begin position="112"/>
        <end position="135"/>
    </location>
</feature>
<feature type="region of interest" description="Disordered" evidence="2">
    <location>
        <begin position="203"/>
        <end position="378"/>
    </location>
</feature>
<feature type="region of interest" description="Mn 3">
    <location>
        <begin position="237"/>
        <end position="260"/>
    </location>
</feature>
<feature type="compositionally biased region" description="Polar residues" evidence="2">
    <location>
        <begin position="52"/>
        <end position="62"/>
    </location>
</feature>
<feature type="compositionally biased region" description="Basic and acidic residues" evidence="2">
    <location>
        <begin position="203"/>
        <end position="220"/>
    </location>
</feature>
<feature type="compositionally biased region" description="Basic and acidic residues" evidence="2">
    <location>
        <begin position="242"/>
        <end position="252"/>
    </location>
</feature>
<feature type="compositionally biased region" description="Basic and acidic residues" evidence="2">
    <location>
        <begin position="265"/>
        <end position="274"/>
    </location>
</feature>
<feature type="compositionally biased region" description="Basic and acidic residues" evidence="2">
    <location>
        <begin position="306"/>
        <end position="315"/>
    </location>
</feature>
<feature type="compositionally biased region" description="Basic residues" evidence="2">
    <location>
        <begin position="322"/>
        <end position="337"/>
    </location>
</feature>
<feature type="compositionally biased region" description="Basic and acidic residues" evidence="2">
    <location>
        <begin position="359"/>
        <end position="378"/>
    </location>
</feature>
<name>MAP6_XENTR</name>
<sequence length="378" mass="42018">MAWPCVTRACCIARFGNLQDKGDIAVPLMYSKYSEVTDGAQPPPPRPGSAAIETQPSLSDPYSGSLGRFSKKPESARGSVMRQDYQAWKANPEPSCKPRIEYQPSEAPLERETQYKKDFRSWPIPRQGDHPWIPKLSPSPTMPVIASDDKRKKDFVAPKAPPAEIKLINAEQPESAKGRGPTAFIAAPEILISVVQETNEIQKRESFMPKLPAKEPRATRDTGSPHPAQARGERGAGTSYRNEFRPWTDVKPVKPIKAKSQYQPPEEKVVHETSYKATFKGESNQPAAGDNKLMERRRIRSLYSEPSKESSKVEKPSVQTSKPKKTSTSHKPVKKAKEKIMASGRASKKKGAESSSTTKPEEKEKSKEINNKLAEAKE</sequence>
<evidence type="ECO:0000250" key="1"/>
<evidence type="ECO:0000256" key="2">
    <source>
        <dbReference type="SAM" id="MobiDB-lite"/>
    </source>
</evidence>
<evidence type="ECO:0000305" key="3"/>
<comment type="function">
    <text evidence="1">Involved in microtubule stabilization in many cell types, including neuronal cells. Specifically has microtubule cold stabilizing activity. Involved in dendrite morphogenesis and maintenance by regulating lysosomal trafficking (By similarity).</text>
</comment>
<comment type="subcellular location">
    <subcellularLocation>
        <location evidence="1">Cytoplasm</location>
        <location evidence="1">Cytoskeleton</location>
    </subcellularLocation>
</comment>
<comment type="similarity">
    <text evidence="3">Belongs to the STOP family.</text>
</comment>
<dbReference type="EMBL" id="BC159130">
    <property type="protein sequence ID" value="AAI59131.1"/>
    <property type="molecule type" value="mRNA"/>
</dbReference>
<dbReference type="RefSeq" id="NP_001120222.1">
    <property type="nucleotide sequence ID" value="NM_001126750.1"/>
</dbReference>
<dbReference type="RefSeq" id="XP_031753231.1">
    <property type="nucleotide sequence ID" value="XM_031897371.1"/>
</dbReference>
<dbReference type="FunCoup" id="B0S4Q5">
    <property type="interactions" value="180"/>
</dbReference>
<dbReference type="GeneID" id="100145271"/>
<dbReference type="AGR" id="Xenbase:XB-GENE-995345"/>
<dbReference type="Xenbase" id="XB-GENE-995345">
    <property type="gene designation" value="map6"/>
</dbReference>
<dbReference type="InParanoid" id="B0S4Q5"/>
<dbReference type="OMA" id="NEFRPWV"/>
<dbReference type="Proteomes" id="UP000008143">
    <property type="component" value="Chromosome 2"/>
</dbReference>
<dbReference type="Bgee" id="ENSXETG00000015061">
    <property type="expression patterns" value="Expressed in brain and 4 other cell types or tissues"/>
</dbReference>
<dbReference type="GO" id="GO:0005737">
    <property type="term" value="C:cytoplasm"/>
    <property type="evidence" value="ECO:0007669"/>
    <property type="project" value="UniProtKB-KW"/>
</dbReference>
<dbReference type="GO" id="GO:0005874">
    <property type="term" value="C:microtubule"/>
    <property type="evidence" value="ECO:0007669"/>
    <property type="project" value="UniProtKB-KW"/>
</dbReference>
<dbReference type="GO" id="GO:0005516">
    <property type="term" value="F:calmodulin binding"/>
    <property type="evidence" value="ECO:0007669"/>
    <property type="project" value="InterPro"/>
</dbReference>
<dbReference type="GO" id="GO:0008017">
    <property type="term" value="F:microtubule binding"/>
    <property type="evidence" value="ECO:0007669"/>
    <property type="project" value="InterPro"/>
</dbReference>
<dbReference type="GO" id="GO:0048813">
    <property type="term" value="P:dendrite morphogenesis"/>
    <property type="evidence" value="ECO:0000250"/>
    <property type="project" value="UniProtKB"/>
</dbReference>
<dbReference type="GO" id="GO:0032418">
    <property type="term" value="P:lysosome localization"/>
    <property type="evidence" value="ECO:0000250"/>
    <property type="project" value="UniProtKB"/>
</dbReference>
<dbReference type="GO" id="GO:0000226">
    <property type="term" value="P:microtubule cytoskeleton organization"/>
    <property type="evidence" value="ECO:0007669"/>
    <property type="project" value="InterPro"/>
</dbReference>
<dbReference type="InterPro" id="IPR007882">
    <property type="entry name" value="MAP6"/>
</dbReference>
<dbReference type="PANTHER" id="PTHR14759:SF29">
    <property type="entry name" value="MICROTUBULE-ASSOCIATED PROTEIN 6"/>
    <property type="match status" value="1"/>
</dbReference>
<dbReference type="PANTHER" id="PTHR14759">
    <property type="entry name" value="STOP PROTEIN"/>
    <property type="match status" value="1"/>
</dbReference>
<protein>
    <recommendedName>
        <fullName>Microtubule-associated protein 6 homolog</fullName>
        <shortName>MAP-6 homolog</shortName>
    </recommendedName>
    <alternativeName>
        <fullName>Stable tubule-only polypeptide homolog</fullName>
        <shortName>STOP</shortName>
    </alternativeName>
</protein>
<keyword id="KW-0963">Cytoplasm</keyword>
<keyword id="KW-0206">Cytoskeleton</keyword>
<keyword id="KW-0493">Microtubule</keyword>
<keyword id="KW-1185">Reference proteome</keyword>
<keyword id="KW-0813">Transport</keyword>
<accession>B0S4Q5</accession>